<accession>Q88RB9</accession>
<accession>Q7BII9</accession>
<accession>Q93G46</accession>
<protein>
    <recommendedName>
        <fullName>5-aminovalerate aminotransferase DavT</fullName>
        <ecNumber>2.6.1.48</ecNumber>
    </recommendedName>
    <alternativeName>
        <fullName>5-aminovalerate transaminase</fullName>
    </alternativeName>
    <alternativeName>
        <fullName>Delta-aminovalerate aminotransferase</fullName>
    </alternativeName>
</protein>
<feature type="chain" id="PRO_0000418395" description="5-aminovalerate aminotransferase DavT">
    <location>
        <begin position="1"/>
        <end position="425"/>
    </location>
</feature>
<feature type="binding site" evidence="1">
    <location>
        <begin position="112"/>
        <end position="113"/>
    </location>
    <ligand>
        <name>pyridoxal 5'-phosphate</name>
        <dbReference type="ChEBI" id="CHEBI:597326"/>
    </ligand>
</feature>
<feature type="binding site" evidence="1">
    <location>
        <position position="139"/>
    </location>
    <ligand>
        <name>pyridoxal 5'-phosphate</name>
        <dbReference type="ChEBI" id="CHEBI:597326"/>
    </ligand>
</feature>
<feature type="binding site" evidence="1">
    <location>
        <begin position="240"/>
        <end position="243"/>
    </location>
    <ligand>
        <name>pyridoxal 5'-phosphate</name>
        <dbReference type="ChEBI" id="CHEBI:597326"/>
    </ligand>
</feature>
<feature type="binding site" evidence="1">
    <location>
        <position position="298"/>
    </location>
    <ligand>
        <name>pyridoxal 5'-phosphate</name>
        <dbReference type="ChEBI" id="CHEBI:597326"/>
    </ligand>
</feature>
<feature type="modified residue" description="N6-(pyridoxal phosphate)lysine" evidence="1">
    <location>
        <position position="269"/>
    </location>
</feature>
<name>DAVT_PSEPK</name>
<sequence length="425" mass="44824">MSKTNESLMQRRVAAVPRGVGQIHPIFVDTAKNSTVIDVEGRELIDFAGGIAVLNTGHLHPKVVAAVQEQLTKVSHTCFQVLAYEPYVELCEKINKLVPGDFDKKTLLVTTGSEAVENAVKIARAATGRAGVIAFTGGYHGRTMMTLGLTGKVVPYSAGMGLMPGGIFRALFPSELHGISVDDAIASVERIFKNDAEPRDIAAIILEPVQGEGGFLPAPKELMKRLRALCDQHGILLIADEVQTGAGRTGTFFAMEQMGVAPDLTTFAKSIAGGFPLAGVCGKAEYMDAIAPGGLGGTYAGSPIACAAALAVIEVFEEEKLLDRSKAVGERLTAGLREIQKKYPIIGDVRGLGSMIAVEVFEKGTHTPNAAAVGQVVAKAREKGLILLSCGTYGNVLRILVPLTAEDALLDKGLAIIEECFAEIA</sequence>
<organism>
    <name type="scientific">Pseudomonas putida (strain ATCC 47054 / DSM 6125 / CFBP 8728 / NCIMB 11950 / KT2440)</name>
    <dbReference type="NCBI Taxonomy" id="160488"/>
    <lineage>
        <taxon>Bacteria</taxon>
        <taxon>Pseudomonadati</taxon>
        <taxon>Pseudomonadota</taxon>
        <taxon>Gammaproteobacteria</taxon>
        <taxon>Pseudomonadales</taxon>
        <taxon>Pseudomonadaceae</taxon>
        <taxon>Pseudomonas</taxon>
    </lineage>
</organism>
<evidence type="ECO:0000250" key="1"/>
<evidence type="ECO:0000269" key="2">
    <source>
    </source>
</evidence>
<evidence type="ECO:0000305" key="3"/>
<reference key="1">
    <citation type="journal article" date="2001" name="Appl. Environ. Microbiol.">
        <title>Expression of a Pseudomonas putida aminotransferase involved in lysine catabolism is induced in the rhizosphere.</title>
        <authorList>
            <person name="Espinosa-Urgel M."/>
            <person name="Ramos J.L."/>
        </authorList>
    </citation>
    <scope>NUCLEOTIDE SEQUENCE [GENOMIC DNA]</scope>
    <scope>FUNCTION</scope>
    <scope>CATALYTIC ACTIVITY</scope>
    <scope>PATHWAY</scope>
    <scope>INDUCTION</scope>
    <scope>DISRUPTION PHENOTYPE</scope>
    <scope>GENE NAME</scope>
    <source>
        <strain>ATCC 47054 / DSM 6125 / CFBP 8728 / NCIMB 11950 / KT2440</strain>
    </source>
</reference>
<reference key="2">
    <citation type="journal article" date="2002" name="Environ. Microbiol.">
        <title>Complete genome sequence and comparative analysis of the metabolically versatile Pseudomonas putida KT2440.</title>
        <authorList>
            <person name="Nelson K.E."/>
            <person name="Weinel C."/>
            <person name="Paulsen I.T."/>
            <person name="Dodson R.J."/>
            <person name="Hilbert H."/>
            <person name="Martins dos Santos V.A.P."/>
            <person name="Fouts D.E."/>
            <person name="Gill S.R."/>
            <person name="Pop M."/>
            <person name="Holmes M."/>
            <person name="Brinkac L.M."/>
            <person name="Beanan M.J."/>
            <person name="DeBoy R.T."/>
            <person name="Daugherty S.C."/>
            <person name="Kolonay J.F."/>
            <person name="Madupu R."/>
            <person name="Nelson W.C."/>
            <person name="White O."/>
            <person name="Peterson J.D."/>
            <person name="Khouri H.M."/>
            <person name="Hance I."/>
            <person name="Chris Lee P."/>
            <person name="Holtzapple E.K."/>
            <person name="Scanlan D."/>
            <person name="Tran K."/>
            <person name="Moazzez A."/>
            <person name="Utterback T.R."/>
            <person name="Rizzo M."/>
            <person name="Lee K."/>
            <person name="Kosack D."/>
            <person name="Moestl D."/>
            <person name="Wedler H."/>
            <person name="Lauber J."/>
            <person name="Stjepandic D."/>
            <person name="Hoheisel J."/>
            <person name="Straetz M."/>
            <person name="Heim S."/>
            <person name="Kiewitz C."/>
            <person name="Eisen J.A."/>
            <person name="Timmis K.N."/>
            <person name="Duesterhoeft A."/>
            <person name="Tuemmler B."/>
            <person name="Fraser C.M."/>
        </authorList>
    </citation>
    <scope>NUCLEOTIDE SEQUENCE [LARGE SCALE GENOMIC DNA]</scope>
    <source>
        <strain>ATCC 47054 / DSM 6125 / CFBP 8728 / NCIMB 11950 / KT2440</strain>
    </source>
</reference>
<comment type="function">
    <text evidence="2">Catalyzes the conversion of 5-aminovalerate to 5-oxopentanoate.</text>
</comment>
<comment type="catalytic activity">
    <reaction evidence="2">
        <text>5-aminopentanoate + 2-oxoglutarate = 5-oxopentanoate + L-glutamate</text>
        <dbReference type="Rhea" id="RHEA:10212"/>
        <dbReference type="ChEBI" id="CHEBI:16120"/>
        <dbReference type="ChEBI" id="CHEBI:16810"/>
        <dbReference type="ChEBI" id="CHEBI:29985"/>
        <dbReference type="ChEBI" id="CHEBI:356010"/>
        <dbReference type="EC" id="2.6.1.48"/>
    </reaction>
</comment>
<comment type="cofactor">
    <cofactor evidence="1">
        <name>pyridoxal 5'-phosphate</name>
        <dbReference type="ChEBI" id="CHEBI:597326"/>
    </cofactor>
</comment>
<comment type="induction">
    <text evidence="2">Induced in response to corn root exudates, by lysine and by 5-aminovalerate.</text>
</comment>
<comment type="disruption phenotype">
    <text evidence="2">Mutants are impaired in lysine utilization and show a slight reduction in the root colonization capacity.</text>
</comment>
<comment type="similarity">
    <text evidence="3">Belongs to the class-III pyridoxal-phosphate-dependent aminotransferase family.</text>
</comment>
<gene>
    <name type="primary">davT</name>
    <name type="ordered locus">PP_0214</name>
</gene>
<proteinExistence type="evidence at protein level"/>
<dbReference type="EC" id="2.6.1.48"/>
<dbReference type="EMBL" id="AF299291">
    <property type="protein sequence ID" value="AAK97868.1"/>
    <property type="molecule type" value="Genomic_DNA"/>
</dbReference>
<dbReference type="EMBL" id="AE015451">
    <property type="protein sequence ID" value="AAN65846.1"/>
    <property type="molecule type" value="Genomic_DNA"/>
</dbReference>
<dbReference type="RefSeq" id="NP_742382.1">
    <property type="nucleotide sequence ID" value="NC_002947.4"/>
</dbReference>
<dbReference type="SMR" id="Q88RB9"/>
<dbReference type="STRING" id="160488.PP_0214"/>
<dbReference type="PaxDb" id="160488-PP_0214"/>
<dbReference type="KEGG" id="ppu:PP_0214"/>
<dbReference type="PATRIC" id="fig|160488.4.peg.228"/>
<dbReference type="eggNOG" id="COG0160">
    <property type="taxonomic scope" value="Bacteria"/>
</dbReference>
<dbReference type="HOGENOM" id="CLU_016922_10_0_6"/>
<dbReference type="OrthoDB" id="9801052at2"/>
<dbReference type="PhylomeDB" id="Q88RB9"/>
<dbReference type="BioCyc" id="PPUT160488:G1G01-236-MONOMER"/>
<dbReference type="BRENDA" id="2.6.1.48">
    <property type="organism ID" value="5092"/>
</dbReference>
<dbReference type="Proteomes" id="UP000000556">
    <property type="component" value="Chromosome"/>
</dbReference>
<dbReference type="GO" id="GO:0034386">
    <property type="term" value="F:4-aminobutyrate:2-oxoglutarate transaminase activity"/>
    <property type="evidence" value="ECO:0007669"/>
    <property type="project" value="InterPro"/>
</dbReference>
<dbReference type="GO" id="GO:0047589">
    <property type="term" value="F:5-aminovalerate transaminase activity"/>
    <property type="evidence" value="ECO:0000314"/>
    <property type="project" value="UniProtKB"/>
</dbReference>
<dbReference type="GO" id="GO:0042802">
    <property type="term" value="F:identical protein binding"/>
    <property type="evidence" value="ECO:0007669"/>
    <property type="project" value="TreeGrafter"/>
</dbReference>
<dbReference type="GO" id="GO:0030170">
    <property type="term" value="F:pyridoxal phosphate binding"/>
    <property type="evidence" value="ECO:0007669"/>
    <property type="project" value="InterPro"/>
</dbReference>
<dbReference type="GO" id="GO:0009448">
    <property type="term" value="P:gamma-aminobutyric acid metabolic process"/>
    <property type="evidence" value="ECO:0007669"/>
    <property type="project" value="InterPro"/>
</dbReference>
<dbReference type="GO" id="GO:0019477">
    <property type="term" value="P:L-lysine catabolic process"/>
    <property type="evidence" value="ECO:0000315"/>
    <property type="project" value="UniProtKB"/>
</dbReference>
<dbReference type="CDD" id="cd00610">
    <property type="entry name" value="OAT_like"/>
    <property type="match status" value="1"/>
</dbReference>
<dbReference type="FunFam" id="3.40.640.10:FF:000013">
    <property type="entry name" value="4-aminobutyrate aminotransferase"/>
    <property type="match status" value="1"/>
</dbReference>
<dbReference type="FunFam" id="3.90.1150.10:FF:000022">
    <property type="entry name" value="4-aminobutyrate aminotransferase"/>
    <property type="match status" value="1"/>
</dbReference>
<dbReference type="Gene3D" id="3.90.1150.10">
    <property type="entry name" value="Aspartate Aminotransferase, domain 1"/>
    <property type="match status" value="1"/>
</dbReference>
<dbReference type="Gene3D" id="3.40.640.10">
    <property type="entry name" value="Type I PLP-dependent aspartate aminotransferase-like (Major domain)"/>
    <property type="match status" value="1"/>
</dbReference>
<dbReference type="InterPro" id="IPR004632">
    <property type="entry name" value="4NH2But_aminotransferase_bac"/>
</dbReference>
<dbReference type="InterPro" id="IPR005814">
    <property type="entry name" value="Aminotrans_3"/>
</dbReference>
<dbReference type="InterPro" id="IPR049704">
    <property type="entry name" value="Aminotrans_3_PPA_site"/>
</dbReference>
<dbReference type="InterPro" id="IPR050103">
    <property type="entry name" value="Class-III_PLP-dep_AT"/>
</dbReference>
<dbReference type="InterPro" id="IPR015424">
    <property type="entry name" value="PyrdxlP-dep_Trfase"/>
</dbReference>
<dbReference type="InterPro" id="IPR015421">
    <property type="entry name" value="PyrdxlP-dep_Trfase_major"/>
</dbReference>
<dbReference type="InterPro" id="IPR015422">
    <property type="entry name" value="PyrdxlP-dep_Trfase_small"/>
</dbReference>
<dbReference type="NCBIfam" id="TIGR00700">
    <property type="entry name" value="GABAtrnsam"/>
    <property type="match status" value="1"/>
</dbReference>
<dbReference type="NCBIfam" id="NF005985">
    <property type="entry name" value="PRK08088.1"/>
    <property type="match status" value="1"/>
</dbReference>
<dbReference type="PANTHER" id="PTHR11986">
    <property type="entry name" value="AMINOTRANSFERASE CLASS III"/>
    <property type="match status" value="1"/>
</dbReference>
<dbReference type="PANTHER" id="PTHR11986:SF58">
    <property type="entry name" value="LEUCINE_METHIONINE RACEMASE"/>
    <property type="match status" value="1"/>
</dbReference>
<dbReference type="Pfam" id="PF00202">
    <property type="entry name" value="Aminotran_3"/>
    <property type="match status" value="1"/>
</dbReference>
<dbReference type="PIRSF" id="PIRSF000521">
    <property type="entry name" value="Transaminase_4ab_Lys_Orn"/>
    <property type="match status" value="1"/>
</dbReference>
<dbReference type="SUPFAM" id="SSF53383">
    <property type="entry name" value="PLP-dependent transferases"/>
    <property type="match status" value="1"/>
</dbReference>
<dbReference type="PROSITE" id="PS00600">
    <property type="entry name" value="AA_TRANSFER_CLASS_3"/>
    <property type="match status" value="1"/>
</dbReference>
<keyword id="KW-0032">Aminotransferase</keyword>
<keyword id="KW-0663">Pyridoxal phosphate</keyword>
<keyword id="KW-1185">Reference proteome</keyword>
<keyword id="KW-0808">Transferase</keyword>